<proteinExistence type="inferred from homology"/>
<reference key="1">
    <citation type="journal article" date="2006" name="Environ. Microbiol.">
        <title>Whole genome analysis of the marine Bacteroidetes'Gramella forsetii' reveals adaptations to degradation of polymeric organic matter.</title>
        <authorList>
            <person name="Bauer M."/>
            <person name="Kube M."/>
            <person name="Teeling H."/>
            <person name="Richter M."/>
            <person name="Lombardot T."/>
            <person name="Allers E."/>
            <person name="Wuerdemann C.A."/>
            <person name="Quast C."/>
            <person name="Kuhl H."/>
            <person name="Knaust F."/>
            <person name="Woebken D."/>
            <person name="Bischof K."/>
            <person name="Mussmann M."/>
            <person name="Choudhuri J.V."/>
            <person name="Meyer F."/>
            <person name="Reinhardt R."/>
            <person name="Amann R.I."/>
            <person name="Gloeckner F.O."/>
        </authorList>
    </citation>
    <scope>NUCLEOTIDE SEQUENCE [LARGE SCALE GENOMIC DNA]</scope>
    <source>
        <strain>DSM 17595 / CGMCC 1.15422 / KT0803</strain>
    </source>
</reference>
<comment type="function">
    <text evidence="1">Catalyzes the reversible phosphorylation of UMP to UDP.</text>
</comment>
<comment type="catalytic activity">
    <reaction evidence="1">
        <text>UMP + ATP = UDP + ADP</text>
        <dbReference type="Rhea" id="RHEA:24400"/>
        <dbReference type="ChEBI" id="CHEBI:30616"/>
        <dbReference type="ChEBI" id="CHEBI:57865"/>
        <dbReference type="ChEBI" id="CHEBI:58223"/>
        <dbReference type="ChEBI" id="CHEBI:456216"/>
        <dbReference type="EC" id="2.7.4.22"/>
    </reaction>
</comment>
<comment type="activity regulation">
    <text evidence="1">Inhibited by UTP.</text>
</comment>
<comment type="pathway">
    <text evidence="1">Pyrimidine metabolism; CTP biosynthesis via de novo pathway; UDP from UMP (UMPK route): step 1/1.</text>
</comment>
<comment type="subunit">
    <text evidence="1">Homohexamer.</text>
</comment>
<comment type="subcellular location">
    <subcellularLocation>
        <location evidence="1">Cytoplasm</location>
    </subcellularLocation>
</comment>
<comment type="similarity">
    <text evidence="1">Belongs to the UMP kinase family.</text>
</comment>
<feature type="chain" id="PRO_0000323859" description="Uridylate kinase">
    <location>
        <begin position="1"/>
        <end position="235"/>
    </location>
</feature>
<feature type="binding site" evidence="1">
    <location>
        <begin position="9"/>
        <end position="12"/>
    </location>
    <ligand>
        <name>ATP</name>
        <dbReference type="ChEBI" id="CHEBI:30616"/>
    </ligand>
</feature>
<feature type="binding site" evidence="1">
    <location>
        <position position="51"/>
    </location>
    <ligand>
        <name>UMP</name>
        <dbReference type="ChEBI" id="CHEBI:57865"/>
    </ligand>
</feature>
<feature type="binding site" evidence="1">
    <location>
        <position position="52"/>
    </location>
    <ligand>
        <name>ATP</name>
        <dbReference type="ChEBI" id="CHEBI:30616"/>
    </ligand>
</feature>
<feature type="binding site" evidence="1">
    <location>
        <position position="56"/>
    </location>
    <ligand>
        <name>ATP</name>
        <dbReference type="ChEBI" id="CHEBI:30616"/>
    </ligand>
</feature>
<feature type="binding site" evidence="1">
    <location>
        <position position="71"/>
    </location>
    <ligand>
        <name>UMP</name>
        <dbReference type="ChEBI" id="CHEBI:57865"/>
    </ligand>
</feature>
<feature type="binding site" evidence="1">
    <location>
        <begin position="132"/>
        <end position="139"/>
    </location>
    <ligand>
        <name>UMP</name>
        <dbReference type="ChEBI" id="CHEBI:57865"/>
    </ligand>
</feature>
<feature type="binding site" evidence="1">
    <location>
        <position position="159"/>
    </location>
    <ligand>
        <name>ATP</name>
        <dbReference type="ChEBI" id="CHEBI:30616"/>
    </ligand>
</feature>
<feature type="binding site" evidence="1">
    <location>
        <position position="165"/>
    </location>
    <ligand>
        <name>ATP</name>
        <dbReference type="ChEBI" id="CHEBI:30616"/>
    </ligand>
</feature>
<feature type="binding site" evidence="1">
    <location>
        <position position="168"/>
    </location>
    <ligand>
        <name>ATP</name>
        <dbReference type="ChEBI" id="CHEBI:30616"/>
    </ligand>
</feature>
<name>PYRH_CHRFK</name>
<accession>A0LXJ4</accession>
<sequence length="235" mass="25635">MHYERILLKLSGEALMGNRQYGIDPERLAEYAAEIKSVVDKGVEVAIVIGGGNIFRGVAGASRGMDRVQGDHMGMLATVINGLALQSALEDANIQTRLQSAIKINEVAEPFIRRKAIRHLEKGRVVIFGGGTGNPYFTTDSAAVLRAIEIKADVILKGTRVDGIYTSDPEKNKEATKFDFITFEDVIKKGLKVMDTTAFTLSQENELPIIVFDMNKPGNLLKVATGERVGTKVNL</sequence>
<protein>
    <recommendedName>
        <fullName evidence="1">Uridylate kinase</fullName>
        <shortName evidence="1">UK</shortName>
        <ecNumber evidence="1">2.7.4.22</ecNumber>
    </recommendedName>
    <alternativeName>
        <fullName evidence="1">Uridine monophosphate kinase</fullName>
        <shortName evidence="1">UMP kinase</shortName>
        <shortName evidence="1">UMPK</shortName>
    </alternativeName>
</protein>
<keyword id="KW-0067">ATP-binding</keyword>
<keyword id="KW-0963">Cytoplasm</keyword>
<keyword id="KW-0418">Kinase</keyword>
<keyword id="KW-0547">Nucleotide-binding</keyword>
<keyword id="KW-0665">Pyrimidine biosynthesis</keyword>
<keyword id="KW-0808">Transferase</keyword>
<evidence type="ECO:0000255" key="1">
    <source>
        <dbReference type="HAMAP-Rule" id="MF_01220"/>
    </source>
</evidence>
<dbReference type="EC" id="2.7.4.22" evidence="1"/>
<dbReference type="EMBL" id="CU207366">
    <property type="protein sequence ID" value="CAL65089.1"/>
    <property type="molecule type" value="Genomic_DNA"/>
</dbReference>
<dbReference type="RefSeq" id="WP_011708027.1">
    <property type="nucleotide sequence ID" value="NC_008571.1"/>
</dbReference>
<dbReference type="SMR" id="A0LXJ4"/>
<dbReference type="STRING" id="411154.GFO_0100"/>
<dbReference type="KEGG" id="gfo:GFO_0100"/>
<dbReference type="eggNOG" id="COG0528">
    <property type="taxonomic scope" value="Bacteria"/>
</dbReference>
<dbReference type="HOGENOM" id="CLU_033861_0_0_10"/>
<dbReference type="OrthoDB" id="9807458at2"/>
<dbReference type="UniPathway" id="UPA00159">
    <property type="reaction ID" value="UER00275"/>
</dbReference>
<dbReference type="Proteomes" id="UP000000755">
    <property type="component" value="Chromosome"/>
</dbReference>
<dbReference type="GO" id="GO:0005737">
    <property type="term" value="C:cytoplasm"/>
    <property type="evidence" value="ECO:0007669"/>
    <property type="project" value="UniProtKB-SubCell"/>
</dbReference>
<dbReference type="GO" id="GO:0005524">
    <property type="term" value="F:ATP binding"/>
    <property type="evidence" value="ECO:0007669"/>
    <property type="project" value="UniProtKB-KW"/>
</dbReference>
<dbReference type="GO" id="GO:0033862">
    <property type="term" value="F:UMP kinase activity"/>
    <property type="evidence" value="ECO:0007669"/>
    <property type="project" value="UniProtKB-EC"/>
</dbReference>
<dbReference type="GO" id="GO:0044210">
    <property type="term" value="P:'de novo' CTP biosynthetic process"/>
    <property type="evidence" value="ECO:0007669"/>
    <property type="project" value="UniProtKB-UniRule"/>
</dbReference>
<dbReference type="GO" id="GO:0006225">
    <property type="term" value="P:UDP biosynthetic process"/>
    <property type="evidence" value="ECO:0007669"/>
    <property type="project" value="TreeGrafter"/>
</dbReference>
<dbReference type="CDD" id="cd04254">
    <property type="entry name" value="AAK_UMPK-PyrH-Ec"/>
    <property type="match status" value="1"/>
</dbReference>
<dbReference type="FunFam" id="3.40.1160.10:FF:000001">
    <property type="entry name" value="Uridylate kinase"/>
    <property type="match status" value="1"/>
</dbReference>
<dbReference type="Gene3D" id="3.40.1160.10">
    <property type="entry name" value="Acetylglutamate kinase-like"/>
    <property type="match status" value="1"/>
</dbReference>
<dbReference type="HAMAP" id="MF_01220_B">
    <property type="entry name" value="PyrH_B"/>
    <property type="match status" value="1"/>
</dbReference>
<dbReference type="InterPro" id="IPR036393">
    <property type="entry name" value="AceGlu_kinase-like_sf"/>
</dbReference>
<dbReference type="InterPro" id="IPR001048">
    <property type="entry name" value="Asp/Glu/Uridylate_kinase"/>
</dbReference>
<dbReference type="InterPro" id="IPR011817">
    <property type="entry name" value="Uridylate_kinase"/>
</dbReference>
<dbReference type="InterPro" id="IPR015963">
    <property type="entry name" value="Uridylate_kinase_bac"/>
</dbReference>
<dbReference type="NCBIfam" id="TIGR02075">
    <property type="entry name" value="pyrH_bact"/>
    <property type="match status" value="1"/>
</dbReference>
<dbReference type="PANTHER" id="PTHR42833">
    <property type="entry name" value="URIDYLATE KINASE"/>
    <property type="match status" value="1"/>
</dbReference>
<dbReference type="PANTHER" id="PTHR42833:SF4">
    <property type="entry name" value="URIDYLATE KINASE PUMPKIN, CHLOROPLASTIC"/>
    <property type="match status" value="1"/>
</dbReference>
<dbReference type="Pfam" id="PF00696">
    <property type="entry name" value="AA_kinase"/>
    <property type="match status" value="1"/>
</dbReference>
<dbReference type="PIRSF" id="PIRSF005650">
    <property type="entry name" value="Uridylate_kin"/>
    <property type="match status" value="1"/>
</dbReference>
<dbReference type="SUPFAM" id="SSF53633">
    <property type="entry name" value="Carbamate kinase-like"/>
    <property type="match status" value="1"/>
</dbReference>
<organism>
    <name type="scientific">Christiangramia forsetii (strain DSM 17595 / CGMCC 1.15422 / KT0803)</name>
    <name type="common">Gramella forsetii</name>
    <dbReference type="NCBI Taxonomy" id="411154"/>
    <lineage>
        <taxon>Bacteria</taxon>
        <taxon>Pseudomonadati</taxon>
        <taxon>Bacteroidota</taxon>
        <taxon>Flavobacteriia</taxon>
        <taxon>Flavobacteriales</taxon>
        <taxon>Flavobacteriaceae</taxon>
        <taxon>Christiangramia</taxon>
    </lineage>
</organism>
<gene>
    <name evidence="1" type="primary">pyrH</name>
    <name type="ordered locus">GFO_0100</name>
</gene>